<organism>
    <name type="scientific">Escherichia coli O6:H1 (strain CFT073 / ATCC 700928 / UPEC)</name>
    <dbReference type="NCBI Taxonomy" id="199310"/>
    <lineage>
        <taxon>Bacteria</taxon>
        <taxon>Pseudomonadati</taxon>
        <taxon>Pseudomonadota</taxon>
        <taxon>Gammaproteobacteria</taxon>
        <taxon>Enterobacterales</taxon>
        <taxon>Enterobacteriaceae</taxon>
        <taxon>Escherichia</taxon>
    </lineage>
</organism>
<evidence type="ECO:0000255" key="1">
    <source>
        <dbReference type="HAMAP-Rule" id="MF_00658"/>
    </source>
</evidence>
<proteinExistence type="inferred from homology"/>
<accession>P0A8I9</accession>
<accession>P05850</accession>
<sequence length="155" mass="17341">MKLQLVAVGTKMPDWVQTGFTEYLRRFPKDMPFELIEIPAGKRGKNADIKRILDKEGEQMLAAAGKNRIVTLDIPGKPWDTPQLAAELERWKLDGRDVSLLIGGPEGLSPACKAAAEQSWSLSALTLPHPLVRVLVAESLYRAWSITTNHPYHRE</sequence>
<keyword id="KW-0963">Cytoplasm</keyword>
<keyword id="KW-0489">Methyltransferase</keyword>
<keyword id="KW-1185">Reference proteome</keyword>
<keyword id="KW-0698">rRNA processing</keyword>
<keyword id="KW-0949">S-adenosyl-L-methionine</keyword>
<keyword id="KW-0808">Transferase</keyword>
<dbReference type="EC" id="2.1.1.177" evidence="1"/>
<dbReference type="EMBL" id="AE014075">
    <property type="protein sequence ID" value="AAN79200.1"/>
    <property type="molecule type" value="Genomic_DNA"/>
</dbReference>
<dbReference type="RefSeq" id="WP_000776104.1">
    <property type="nucleotide sequence ID" value="NZ_CP051263.1"/>
</dbReference>
<dbReference type="SMR" id="P0A8I9"/>
<dbReference type="STRING" id="199310.c0727"/>
<dbReference type="GeneID" id="93776846"/>
<dbReference type="KEGG" id="ecc:c0727"/>
<dbReference type="eggNOG" id="COG1576">
    <property type="taxonomic scope" value="Bacteria"/>
</dbReference>
<dbReference type="HOGENOM" id="CLU_100552_1_0_6"/>
<dbReference type="BioCyc" id="ECOL199310:C0727-MONOMER"/>
<dbReference type="Proteomes" id="UP000001410">
    <property type="component" value="Chromosome"/>
</dbReference>
<dbReference type="GO" id="GO:0005737">
    <property type="term" value="C:cytoplasm"/>
    <property type="evidence" value="ECO:0007669"/>
    <property type="project" value="UniProtKB-SubCell"/>
</dbReference>
<dbReference type="GO" id="GO:0070038">
    <property type="term" value="F:rRNA (pseudouridine-N3-)-methyltransferase activity"/>
    <property type="evidence" value="ECO:0007669"/>
    <property type="project" value="UniProtKB-UniRule"/>
</dbReference>
<dbReference type="CDD" id="cd18081">
    <property type="entry name" value="RlmH-like"/>
    <property type="match status" value="1"/>
</dbReference>
<dbReference type="FunFam" id="3.40.1280.10:FF:000004">
    <property type="entry name" value="Ribosomal RNA large subunit methyltransferase H"/>
    <property type="match status" value="1"/>
</dbReference>
<dbReference type="Gene3D" id="3.40.1280.10">
    <property type="match status" value="1"/>
</dbReference>
<dbReference type="HAMAP" id="MF_00658">
    <property type="entry name" value="23SrRNA_methyltr_H"/>
    <property type="match status" value="1"/>
</dbReference>
<dbReference type="InterPro" id="IPR029028">
    <property type="entry name" value="Alpha/beta_knot_MTases"/>
</dbReference>
<dbReference type="InterPro" id="IPR003742">
    <property type="entry name" value="RlmH-like"/>
</dbReference>
<dbReference type="InterPro" id="IPR029026">
    <property type="entry name" value="tRNA_m1G_MTases_N"/>
</dbReference>
<dbReference type="NCBIfam" id="NF000984">
    <property type="entry name" value="PRK00103.1-1"/>
    <property type="match status" value="1"/>
</dbReference>
<dbReference type="NCBIfam" id="NF000986">
    <property type="entry name" value="PRK00103.1-4"/>
    <property type="match status" value="1"/>
</dbReference>
<dbReference type="NCBIfam" id="TIGR00246">
    <property type="entry name" value="tRNA_RlmH_YbeA"/>
    <property type="match status" value="1"/>
</dbReference>
<dbReference type="PANTHER" id="PTHR33603">
    <property type="entry name" value="METHYLTRANSFERASE"/>
    <property type="match status" value="1"/>
</dbReference>
<dbReference type="PANTHER" id="PTHR33603:SF1">
    <property type="entry name" value="RIBOSOMAL RNA LARGE SUBUNIT METHYLTRANSFERASE H"/>
    <property type="match status" value="1"/>
</dbReference>
<dbReference type="Pfam" id="PF02590">
    <property type="entry name" value="SPOUT_MTase"/>
    <property type="match status" value="1"/>
</dbReference>
<dbReference type="PIRSF" id="PIRSF004505">
    <property type="entry name" value="MT_bac"/>
    <property type="match status" value="1"/>
</dbReference>
<dbReference type="SUPFAM" id="SSF75217">
    <property type="entry name" value="alpha/beta knot"/>
    <property type="match status" value="1"/>
</dbReference>
<name>RLMH_ECOL6</name>
<comment type="function">
    <text evidence="1">Specifically methylates the pseudouridine at position 1915 (m3Psi1915) in 23S rRNA.</text>
</comment>
<comment type="catalytic activity">
    <reaction evidence="1">
        <text>pseudouridine(1915) in 23S rRNA + S-adenosyl-L-methionine = N(3)-methylpseudouridine(1915) in 23S rRNA + S-adenosyl-L-homocysteine + H(+)</text>
        <dbReference type="Rhea" id="RHEA:42752"/>
        <dbReference type="Rhea" id="RHEA-COMP:10221"/>
        <dbReference type="Rhea" id="RHEA-COMP:10222"/>
        <dbReference type="ChEBI" id="CHEBI:15378"/>
        <dbReference type="ChEBI" id="CHEBI:57856"/>
        <dbReference type="ChEBI" id="CHEBI:59789"/>
        <dbReference type="ChEBI" id="CHEBI:65314"/>
        <dbReference type="ChEBI" id="CHEBI:74486"/>
        <dbReference type="EC" id="2.1.1.177"/>
    </reaction>
</comment>
<comment type="subunit">
    <text evidence="1">Homodimer.</text>
</comment>
<comment type="subcellular location">
    <subcellularLocation>
        <location evidence="1">Cytoplasm</location>
    </subcellularLocation>
</comment>
<comment type="similarity">
    <text evidence="1">Belongs to the RNA methyltransferase RlmH family.</text>
</comment>
<protein>
    <recommendedName>
        <fullName evidence="1">Ribosomal RNA large subunit methyltransferase H</fullName>
        <ecNumber evidence="1">2.1.1.177</ecNumber>
    </recommendedName>
    <alternativeName>
        <fullName evidence="1">23S rRNA (pseudouridine1915-N3)-methyltransferase</fullName>
    </alternativeName>
    <alternativeName>
        <fullName evidence="1">23S rRNA m3Psi1915 methyltransferase</fullName>
    </alternativeName>
    <alternativeName>
        <fullName evidence="1">rRNA (pseudouridine-N3-)-methyltransferase RlmH</fullName>
    </alternativeName>
</protein>
<reference key="1">
    <citation type="journal article" date="2002" name="Proc. Natl. Acad. Sci. U.S.A.">
        <title>Extensive mosaic structure revealed by the complete genome sequence of uropathogenic Escherichia coli.</title>
        <authorList>
            <person name="Welch R.A."/>
            <person name="Burland V."/>
            <person name="Plunkett G. III"/>
            <person name="Redford P."/>
            <person name="Roesch P."/>
            <person name="Rasko D."/>
            <person name="Buckles E.L."/>
            <person name="Liou S.-R."/>
            <person name="Boutin A."/>
            <person name="Hackett J."/>
            <person name="Stroud D."/>
            <person name="Mayhew G.F."/>
            <person name="Rose D.J."/>
            <person name="Zhou S."/>
            <person name="Schwartz D.C."/>
            <person name="Perna N.T."/>
            <person name="Mobley H.L.T."/>
            <person name="Donnenberg M.S."/>
            <person name="Blattner F.R."/>
        </authorList>
    </citation>
    <scope>NUCLEOTIDE SEQUENCE [LARGE SCALE GENOMIC DNA]</scope>
    <source>
        <strain>CFT073 / ATCC 700928 / UPEC</strain>
    </source>
</reference>
<gene>
    <name evidence="1" type="primary">rlmH</name>
    <name type="ordered locus">c0727</name>
</gene>
<feature type="chain" id="PRO_0000198117" description="Ribosomal RNA large subunit methyltransferase H">
    <location>
        <begin position="1"/>
        <end position="155"/>
    </location>
</feature>
<feature type="binding site" evidence="1">
    <location>
        <position position="72"/>
    </location>
    <ligand>
        <name>S-adenosyl-L-methionine</name>
        <dbReference type="ChEBI" id="CHEBI:59789"/>
    </ligand>
</feature>
<feature type="binding site" evidence="1">
    <location>
        <position position="103"/>
    </location>
    <ligand>
        <name>S-adenosyl-L-methionine</name>
        <dbReference type="ChEBI" id="CHEBI:59789"/>
    </ligand>
</feature>
<feature type="binding site" evidence="1">
    <location>
        <begin position="122"/>
        <end position="127"/>
    </location>
    <ligand>
        <name>S-adenosyl-L-methionine</name>
        <dbReference type="ChEBI" id="CHEBI:59789"/>
    </ligand>
</feature>